<reference key="1">
    <citation type="submission" date="2008-02" db="EMBL/GenBank/DDBJ databases">
        <title>Complete sequence of Haemophilus somnus 2336.</title>
        <authorList>
            <consortium name="US DOE Joint Genome Institute"/>
            <person name="Siddaramappa S."/>
            <person name="Duncan A.J."/>
            <person name="Challacombe J.F."/>
            <person name="Rainey D."/>
            <person name="Gillaspy A.F."/>
            <person name="Carson M."/>
            <person name="Gipson J."/>
            <person name="Gipson M."/>
            <person name="Bruce D."/>
            <person name="Detter J.C."/>
            <person name="Han C.S."/>
            <person name="Land M."/>
            <person name="Tapia R."/>
            <person name="Thompson L.S."/>
            <person name="Orvis J."/>
            <person name="Zaitshik J."/>
            <person name="Barnes G."/>
            <person name="Brettin T.S."/>
            <person name="Dyer D.W."/>
            <person name="Inzana T.J."/>
        </authorList>
    </citation>
    <scope>NUCLEOTIDE SEQUENCE [LARGE SCALE GENOMIC DNA]</scope>
    <source>
        <strain>2336</strain>
    </source>
</reference>
<organism>
    <name type="scientific">Histophilus somni (strain 2336)</name>
    <name type="common">Haemophilus somnus</name>
    <dbReference type="NCBI Taxonomy" id="228400"/>
    <lineage>
        <taxon>Bacteria</taxon>
        <taxon>Pseudomonadati</taxon>
        <taxon>Pseudomonadota</taxon>
        <taxon>Gammaproteobacteria</taxon>
        <taxon>Pasteurellales</taxon>
        <taxon>Pasteurellaceae</taxon>
        <taxon>Histophilus</taxon>
    </lineage>
</organism>
<feature type="chain" id="PRO_1000087090" description="Large ribosomal subunit protein uL13">
    <location>
        <begin position="1"/>
        <end position="142"/>
    </location>
</feature>
<accession>B0UTU4</accession>
<proteinExistence type="inferred from homology"/>
<name>RL13_HISS2</name>
<gene>
    <name evidence="1" type="primary">rplM</name>
    <name type="ordered locus">HSM_1219</name>
</gene>
<dbReference type="EMBL" id="CP000947">
    <property type="protein sequence ID" value="ACA30944.1"/>
    <property type="molecule type" value="Genomic_DNA"/>
</dbReference>
<dbReference type="RefSeq" id="WP_012340391.1">
    <property type="nucleotide sequence ID" value="NC_010519.1"/>
</dbReference>
<dbReference type="SMR" id="B0UTU4"/>
<dbReference type="STRING" id="228400.HSM_1219"/>
<dbReference type="GeneID" id="31487522"/>
<dbReference type="KEGG" id="hsm:HSM_1219"/>
<dbReference type="HOGENOM" id="CLU_082184_2_2_6"/>
<dbReference type="GO" id="GO:0022625">
    <property type="term" value="C:cytosolic large ribosomal subunit"/>
    <property type="evidence" value="ECO:0007669"/>
    <property type="project" value="TreeGrafter"/>
</dbReference>
<dbReference type="GO" id="GO:0003729">
    <property type="term" value="F:mRNA binding"/>
    <property type="evidence" value="ECO:0007669"/>
    <property type="project" value="TreeGrafter"/>
</dbReference>
<dbReference type="GO" id="GO:0003735">
    <property type="term" value="F:structural constituent of ribosome"/>
    <property type="evidence" value="ECO:0007669"/>
    <property type="project" value="InterPro"/>
</dbReference>
<dbReference type="GO" id="GO:0017148">
    <property type="term" value="P:negative regulation of translation"/>
    <property type="evidence" value="ECO:0007669"/>
    <property type="project" value="TreeGrafter"/>
</dbReference>
<dbReference type="GO" id="GO:0006412">
    <property type="term" value="P:translation"/>
    <property type="evidence" value="ECO:0007669"/>
    <property type="project" value="UniProtKB-UniRule"/>
</dbReference>
<dbReference type="CDD" id="cd00392">
    <property type="entry name" value="Ribosomal_L13"/>
    <property type="match status" value="1"/>
</dbReference>
<dbReference type="FunFam" id="3.90.1180.10:FF:000001">
    <property type="entry name" value="50S ribosomal protein L13"/>
    <property type="match status" value="1"/>
</dbReference>
<dbReference type="Gene3D" id="3.90.1180.10">
    <property type="entry name" value="Ribosomal protein L13"/>
    <property type="match status" value="1"/>
</dbReference>
<dbReference type="HAMAP" id="MF_01366">
    <property type="entry name" value="Ribosomal_uL13"/>
    <property type="match status" value="1"/>
</dbReference>
<dbReference type="InterPro" id="IPR005822">
    <property type="entry name" value="Ribosomal_uL13"/>
</dbReference>
<dbReference type="InterPro" id="IPR005823">
    <property type="entry name" value="Ribosomal_uL13_bac-type"/>
</dbReference>
<dbReference type="InterPro" id="IPR023563">
    <property type="entry name" value="Ribosomal_uL13_CS"/>
</dbReference>
<dbReference type="InterPro" id="IPR036899">
    <property type="entry name" value="Ribosomal_uL13_sf"/>
</dbReference>
<dbReference type="NCBIfam" id="TIGR01066">
    <property type="entry name" value="rplM_bact"/>
    <property type="match status" value="1"/>
</dbReference>
<dbReference type="PANTHER" id="PTHR11545:SF2">
    <property type="entry name" value="LARGE RIBOSOMAL SUBUNIT PROTEIN UL13M"/>
    <property type="match status" value="1"/>
</dbReference>
<dbReference type="PANTHER" id="PTHR11545">
    <property type="entry name" value="RIBOSOMAL PROTEIN L13"/>
    <property type="match status" value="1"/>
</dbReference>
<dbReference type="Pfam" id="PF00572">
    <property type="entry name" value="Ribosomal_L13"/>
    <property type="match status" value="1"/>
</dbReference>
<dbReference type="PIRSF" id="PIRSF002181">
    <property type="entry name" value="Ribosomal_L13"/>
    <property type="match status" value="1"/>
</dbReference>
<dbReference type="SUPFAM" id="SSF52161">
    <property type="entry name" value="Ribosomal protein L13"/>
    <property type="match status" value="1"/>
</dbReference>
<dbReference type="PROSITE" id="PS00783">
    <property type="entry name" value="RIBOSOMAL_L13"/>
    <property type="match status" value="1"/>
</dbReference>
<protein>
    <recommendedName>
        <fullName evidence="1">Large ribosomal subunit protein uL13</fullName>
    </recommendedName>
    <alternativeName>
        <fullName evidence="2">50S ribosomal protein L13</fullName>
    </alternativeName>
</protein>
<sequence>MKTFVAKPETVKRDWYVVDATGKTLGRLAAELARRLRGKHKAEYTPHVDTGDYIVVINAEKVAVTGNKETDKLYYWHTGYVGGIKQATFKEMIARRPEAVIEIAVKGMLPKGPLGRAMFRKLKVYAGSEHNHAAQQPQVLDI</sequence>
<evidence type="ECO:0000255" key="1">
    <source>
        <dbReference type="HAMAP-Rule" id="MF_01366"/>
    </source>
</evidence>
<evidence type="ECO:0000305" key="2"/>
<comment type="function">
    <text evidence="1">This protein is one of the early assembly proteins of the 50S ribosomal subunit, although it is not seen to bind rRNA by itself. It is important during the early stages of 50S assembly.</text>
</comment>
<comment type="subunit">
    <text evidence="1">Part of the 50S ribosomal subunit.</text>
</comment>
<comment type="similarity">
    <text evidence="1">Belongs to the universal ribosomal protein uL13 family.</text>
</comment>
<keyword id="KW-0687">Ribonucleoprotein</keyword>
<keyword id="KW-0689">Ribosomal protein</keyword>